<organism>
    <name type="scientific">Brucella melitensis biotype 1 (strain ATCC 23456 / CCUG 17765 / NCTC 10094 / 16M)</name>
    <dbReference type="NCBI Taxonomy" id="224914"/>
    <lineage>
        <taxon>Bacteria</taxon>
        <taxon>Pseudomonadati</taxon>
        <taxon>Pseudomonadota</taxon>
        <taxon>Alphaproteobacteria</taxon>
        <taxon>Hyphomicrobiales</taxon>
        <taxon>Brucellaceae</taxon>
        <taxon>Brucella/Ochrobactrum group</taxon>
        <taxon>Brucella</taxon>
    </lineage>
</organism>
<evidence type="ECO:0000255" key="1">
    <source>
        <dbReference type="HAMAP-Rule" id="MF_01366"/>
    </source>
</evidence>
<evidence type="ECO:0000305" key="2"/>
<proteinExistence type="inferred from homology"/>
<comment type="function">
    <text evidence="1">This protein is one of the early assembly proteins of the 50S ribosomal subunit, although it is not seen to bind rRNA by itself. It is important during the early stages of 50S assembly.</text>
</comment>
<comment type="subunit">
    <text evidence="1">Part of the 50S ribosomal subunit.</text>
</comment>
<comment type="similarity">
    <text evidence="1">Belongs to the universal ribosomal protein uL13 family.</text>
</comment>
<reference key="1">
    <citation type="journal article" date="2002" name="Proc. Natl. Acad. Sci. U.S.A.">
        <title>The genome sequence of the facultative intracellular pathogen Brucella melitensis.</title>
        <authorList>
            <person name="DelVecchio V.G."/>
            <person name="Kapatral V."/>
            <person name="Redkar R.J."/>
            <person name="Patra G."/>
            <person name="Mujer C."/>
            <person name="Los T."/>
            <person name="Ivanova N."/>
            <person name="Anderson I."/>
            <person name="Bhattacharyya A."/>
            <person name="Lykidis A."/>
            <person name="Reznik G."/>
            <person name="Jablonski L."/>
            <person name="Larsen N."/>
            <person name="D'Souza M."/>
            <person name="Bernal A."/>
            <person name="Mazur M."/>
            <person name="Goltsman E."/>
            <person name="Selkov E."/>
            <person name="Elzer P.H."/>
            <person name="Hagius S."/>
            <person name="O'Callaghan D."/>
            <person name="Letesson J.-J."/>
            <person name="Haselkorn R."/>
            <person name="Kyrpides N.C."/>
            <person name="Overbeek R."/>
        </authorList>
    </citation>
    <scope>NUCLEOTIDE SEQUENCE [LARGE SCALE GENOMIC DNA]</scope>
    <source>
        <strain>ATCC 23456 / CCUG 17765 / NCTC 10094 / 16M</strain>
    </source>
</reference>
<dbReference type="EMBL" id="AE008917">
    <property type="protein sequence ID" value="AAL52349.1"/>
    <property type="molecule type" value="Genomic_DNA"/>
</dbReference>
<dbReference type="PIR" id="AB3398">
    <property type="entry name" value="AB3398"/>
</dbReference>
<dbReference type="RefSeq" id="WP_002963926.1">
    <property type="nucleotide sequence ID" value="NZ_GG703778.1"/>
</dbReference>
<dbReference type="SMR" id="Q8YGJ1"/>
<dbReference type="GeneID" id="93016820"/>
<dbReference type="KEGG" id="bme:BMEI1168"/>
<dbReference type="KEGG" id="bmel:DK63_243"/>
<dbReference type="PATRIC" id="fig|224914.52.peg.252"/>
<dbReference type="eggNOG" id="COG0102">
    <property type="taxonomic scope" value="Bacteria"/>
</dbReference>
<dbReference type="PhylomeDB" id="Q8YGJ1"/>
<dbReference type="Proteomes" id="UP000000419">
    <property type="component" value="Chromosome I"/>
</dbReference>
<dbReference type="GO" id="GO:0022625">
    <property type="term" value="C:cytosolic large ribosomal subunit"/>
    <property type="evidence" value="ECO:0007669"/>
    <property type="project" value="TreeGrafter"/>
</dbReference>
<dbReference type="GO" id="GO:0003729">
    <property type="term" value="F:mRNA binding"/>
    <property type="evidence" value="ECO:0007669"/>
    <property type="project" value="TreeGrafter"/>
</dbReference>
<dbReference type="GO" id="GO:0003735">
    <property type="term" value="F:structural constituent of ribosome"/>
    <property type="evidence" value="ECO:0007669"/>
    <property type="project" value="InterPro"/>
</dbReference>
<dbReference type="GO" id="GO:0017148">
    <property type="term" value="P:negative regulation of translation"/>
    <property type="evidence" value="ECO:0007669"/>
    <property type="project" value="TreeGrafter"/>
</dbReference>
<dbReference type="GO" id="GO:0006412">
    <property type="term" value="P:translation"/>
    <property type="evidence" value="ECO:0007669"/>
    <property type="project" value="UniProtKB-UniRule"/>
</dbReference>
<dbReference type="CDD" id="cd00392">
    <property type="entry name" value="Ribosomal_L13"/>
    <property type="match status" value="1"/>
</dbReference>
<dbReference type="FunFam" id="3.90.1180.10:FF:000001">
    <property type="entry name" value="50S ribosomal protein L13"/>
    <property type="match status" value="1"/>
</dbReference>
<dbReference type="Gene3D" id="3.90.1180.10">
    <property type="entry name" value="Ribosomal protein L13"/>
    <property type="match status" value="1"/>
</dbReference>
<dbReference type="HAMAP" id="MF_01366">
    <property type="entry name" value="Ribosomal_uL13"/>
    <property type="match status" value="1"/>
</dbReference>
<dbReference type="InterPro" id="IPR005822">
    <property type="entry name" value="Ribosomal_uL13"/>
</dbReference>
<dbReference type="InterPro" id="IPR005823">
    <property type="entry name" value="Ribosomal_uL13_bac-type"/>
</dbReference>
<dbReference type="InterPro" id="IPR036899">
    <property type="entry name" value="Ribosomal_uL13_sf"/>
</dbReference>
<dbReference type="NCBIfam" id="TIGR01066">
    <property type="entry name" value="rplM_bact"/>
    <property type="match status" value="1"/>
</dbReference>
<dbReference type="PANTHER" id="PTHR11545:SF2">
    <property type="entry name" value="LARGE RIBOSOMAL SUBUNIT PROTEIN UL13M"/>
    <property type="match status" value="1"/>
</dbReference>
<dbReference type="PANTHER" id="PTHR11545">
    <property type="entry name" value="RIBOSOMAL PROTEIN L13"/>
    <property type="match status" value="1"/>
</dbReference>
<dbReference type="Pfam" id="PF00572">
    <property type="entry name" value="Ribosomal_L13"/>
    <property type="match status" value="1"/>
</dbReference>
<dbReference type="PIRSF" id="PIRSF002181">
    <property type="entry name" value="Ribosomal_L13"/>
    <property type="match status" value="1"/>
</dbReference>
<dbReference type="SUPFAM" id="SSF52161">
    <property type="entry name" value="Ribosomal protein L13"/>
    <property type="match status" value="1"/>
</dbReference>
<protein>
    <recommendedName>
        <fullName evidence="1">Large ribosomal subunit protein uL13</fullName>
    </recommendedName>
    <alternativeName>
        <fullName evidence="2">50S ribosomal protein L13</fullName>
    </alternativeName>
</protein>
<name>RL13_BRUME</name>
<feature type="chain" id="PRO_0000261697" description="Large ribosomal subunit protein uL13">
    <location>
        <begin position="1"/>
        <end position="154"/>
    </location>
</feature>
<keyword id="KW-0687">Ribonucleoprotein</keyword>
<keyword id="KW-0689">Ribosomal protein</keyword>
<accession>Q8YGJ1</accession>
<gene>
    <name evidence="1" type="primary">rplM</name>
    <name type="ordered locus">BMEI1168</name>
</gene>
<sequence>MATFSQKPAEVVKKWVLIDAEGLVVGRLASLVANRLRGKHKATFTPHVDDGDNVIIINADKVVLTGKKYTDKKYYWHTGHPGGIKERTARQILEGRFPERVLEKAIERMIPRGPLGRRQMKNLRVNAGPNHQHEAQQPEVLDVAALNRKNKGNA</sequence>